<keyword id="KW-0067">ATP-binding</keyword>
<keyword id="KW-0460">Magnesium</keyword>
<keyword id="KW-0547">Nucleotide-binding</keyword>
<keyword id="KW-0808">Transferase</keyword>
<keyword id="KW-0819">tRNA processing</keyword>
<evidence type="ECO:0000255" key="1">
    <source>
        <dbReference type="HAMAP-Rule" id="MF_00185"/>
    </source>
</evidence>
<comment type="function">
    <text evidence="1">Catalyzes the transfer of a dimethylallyl group onto the adenine at position 37 in tRNAs that read codons beginning with uridine, leading to the formation of N6-(dimethylallyl)adenosine (i(6)A).</text>
</comment>
<comment type="catalytic activity">
    <reaction evidence="1">
        <text>adenosine(37) in tRNA + dimethylallyl diphosphate = N(6)-dimethylallyladenosine(37) in tRNA + diphosphate</text>
        <dbReference type="Rhea" id="RHEA:26482"/>
        <dbReference type="Rhea" id="RHEA-COMP:10162"/>
        <dbReference type="Rhea" id="RHEA-COMP:10375"/>
        <dbReference type="ChEBI" id="CHEBI:33019"/>
        <dbReference type="ChEBI" id="CHEBI:57623"/>
        <dbReference type="ChEBI" id="CHEBI:74411"/>
        <dbReference type="ChEBI" id="CHEBI:74415"/>
        <dbReference type="EC" id="2.5.1.75"/>
    </reaction>
</comment>
<comment type="cofactor">
    <cofactor evidence="1">
        <name>Mg(2+)</name>
        <dbReference type="ChEBI" id="CHEBI:18420"/>
    </cofactor>
</comment>
<comment type="subunit">
    <text evidence="1">Monomer.</text>
</comment>
<comment type="similarity">
    <text evidence="1">Belongs to the IPP transferase family.</text>
</comment>
<reference key="1">
    <citation type="journal article" date="2008" name="BMC Genomics">
        <title>Genome sequence and rapid evolution of the rice pathogen Xanthomonas oryzae pv. oryzae PXO99A.</title>
        <authorList>
            <person name="Salzberg S.L."/>
            <person name="Sommer D.D."/>
            <person name="Schatz M.C."/>
            <person name="Phillippy A.M."/>
            <person name="Rabinowicz P.D."/>
            <person name="Tsuge S."/>
            <person name="Furutani A."/>
            <person name="Ochiai H."/>
            <person name="Delcher A.L."/>
            <person name="Kelley D."/>
            <person name="Madupu R."/>
            <person name="Puiu D."/>
            <person name="Radune D."/>
            <person name="Shumway M."/>
            <person name="Trapnell C."/>
            <person name="Aparna G."/>
            <person name="Jha G."/>
            <person name="Pandey A."/>
            <person name="Patil P.B."/>
            <person name="Ishihara H."/>
            <person name="Meyer D.F."/>
            <person name="Szurek B."/>
            <person name="Verdier V."/>
            <person name="Koebnik R."/>
            <person name="Dow J.M."/>
            <person name="Ryan R.P."/>
            <person name="Hirata H."/>
            <person name="Tsuyumu S."/>
            <person name="Won Lee S."/>
            <person name="Seo Y.-S."/>
            <person name="Sriariyanum M."/>
            <person name="Ronald P.C."/>
            <person name="Sonti R.V."/>
            <person name="Van Sluys M.-A."/>
            <person name="Leach J.E."/>
            <person name="White F.F."/>
            <person name="Bogdanove A.J."/>
        </authorList>
    </citation>
    <scope>NUCLEOTIDE SEQUENCE [LARGE SCALE GENOMIC DNA]</scope>
    <source>
        <strain>PXO99A</strain>
    </source>
</reference>
<protein>
    <recommendedName>
        <fullName evidence="1">tRNA dimethylallyltransferase</fullName>
        <ecNumber evidence="1">2.5.1.75</ecNumber>
    </recommendedName>
    <alternativeName>
        <fullName evidence="1">Dimethylallyl diphosphate:tRNA dimethylallyltransferase</fullName>
        <shortName evidence="1">DMAPP:tRNA dimethylallyltransferase</shortName>
        <shortName evidence="1">DMATase</shortName>
    </alternativeName>
    <alternativeName>
        <fullName evidence="1">Isopentenyl-diphosphate:tRNA isopentenyltransferase</fullName>
        <shortName evidence="1">IPP transferase</shortName>
        <shortName evidence="1">IPPT</shortName>
        <shortName evidence="1">IPTase</shortName>
    </alternativeName>
</protein>
<accession>B2SUC1</accession>
<sequence length="327" mass="35792">MPADQRPLAIALMGPTASGKTALALEAAERWNGEIVSVDSALVYRGLEIGAAKPDAAMRAAVPHHLLDLRDPWQVYSAAEFAGDARQAIAQIVARGKLPILAGGTGLYFRALLEGLSHLPEADRAARASIAAEAEQIGWAGLHSELARVDPVAAARIHATDPQRIQRALEVYRISGRPISYWQALPPGLRLPVRVLKVVLAPRERAVLHGRIERRLDAMLAQGFLAEVEQVRALPQMRAVAVPLDLPAVRAVGYRQAWEYLDGAGSLAEFRDKAIQATRQLAKRQLTWLRGELDARWFDPERDRHQLERALVGFLGDRSAVRQASGV</sequence>
<organism>
    <name type="scientific">Xanthomonas oryzae pv. oryzae (strain PXO99A)</name>
    <dbReference type="NCBI Taxonomy" id="360094"/>
    <lineage>
        <taxon>Bacteria</taxon>
        <taxon>Pseudomonadati</taxon>
        <taxon>Pseudomonadota</taxon>
        <taxon>Gammaproteobacteria</taxon>
        <taxon>Lysobacterales</taxon>
        <taxon>Lysobacteraceae</taxon>
        <taxon>Xanthomonas</taxon>
    </lineage>
</organism>
<dbReference type="EC" id="2.5.1.75" evidence="1"/>
<dbReference type="EMBL" id="CP000967">
    <property type="protein sequence ID" value="ACD58311.1"/>
    <property type="molecule type" value="Genomic_DNA"/>
</dbReference>
<dbReference type="RefSeq" id="WP_012444553.1">
    <property type="nucleotide sequence ID" value="NC_010717.2"/>
</dbReference>
<dbReference type="SMR" id="B2SUC1"/>
<dbReference type="KEGG" id="xop:PXO_00156"/>
<dbReference type="eggNOG" id="COG0324">
    <property type="taxonomic scope" value="Bacteria"/>
</dbReference>
<dbReference type="HOGENOM" id="CLU_032616_0_0_6"/>
<dbReference type="Proteomes" id="UP000001740">
    <property type="component" value="Chromosome"/>
</dbReference>
<dbReference type="GO" id="GO:0005524">
    <property type="term" value="F:ATP binding"/>
    <property type="evidence" value="ECO:0007669"/>
    <property type="project" value="UniProtKB-UniRule"/>
</dbReference>
<dbReference type="GO" id="GO:0052381">
    <property type="term" value="F:tRNA dimethylallyltransferase activity"/>
    <property type="evidence" value="ECO:0007669"/>
    <property type="project" value="UniProtKB-UniRule"/>
</dbReference>
<dbReference type="GO" id="GO:0006400">
    <property type="term" value="P:tRNA modification"/>
    <property type="evidence" value="ECO:0007669"/>
    <property type="project" value="TreeGrafter"/>
</dbReference>
<dbReference type="CDD" id="cd02019">
    <property type="entry name" value="NK"/>
    <property type="match status" value="1"/>
</dbReference>
<dbReference type="FunFam" id="1.10.20.140:FF:000001">
    <property type="entry name" value="tRNA dimethylallyltransferase"/>
    <property type="match status" value="1"/>
</dbReference>
<dbReference type="Gene3D" id="1.10.20.140">
    <property type="match status" value="1"/>
</dbReference>
<dbReference type="Gene3D" id="3.40.50.300">
    <property type="entry name" value="P-loop containing nucleotide triphosphate hydrolases"/>
    <property type="match status" value="1"/>
</dbReference>
<dbReference type="HAMAP" id="MF_00185">
    <property type="entry name" value="IPP_trans"/>
    <property type="match status" value="1"/>
</dbReference>
<dbReference type="InterPro" id="IPR039657">
    <property type="entry name" value="Dimethylallyltransferase"/>
</dbReference>
<dbReference type="InterPro" id="IPR018022">
    <property type="entry name" value="IPT"/>
</dbReference>
<dbReference type="InterPro" id="IPR027417">
    <property type="entry name" value="P-loop_NTPase"/>
</dbReference>
<dbReference type="NCBIfam" id="TIGR00174">
    <property type="entry name" value="miaA"/>
    <property type="match status" value="1"/>
</dbReference>
<dbReference type="PANTHER" id="PTHR11088">
    <property type="entry name" value="TRNA DIMETHYLALLYLTRANSFERASE"/>
    <property type="match status" value="1"/>
</dbReference>
<dbReference type="PANTHER" id="PTHR11088:SF60">
    <property type="entry name" value="TRNA DIMETHYLALLYLTRANSFERASE"/>
    <property type="match status" value="1"/>
</dbReference>
<dbReference type="Pfam" id="PF01715">
    <property type="entry name" value="IPPT"/>
    <property type="match status" value="1"/>
</dbReference>
<dbReference type="SUPFAM" id="SSF52540">
    <property type="entry name" value="P-loop containing nucleoside triphosphate hydrolases"/>
    <property type="match status" value="1"/>
</dbReference>
<feature type="chain" id="PRO_1000098701" description="tRNA dimethylallyltransferase">
    <location>
        <begin position="1"/>
        <end position="327"/>
    </location>
</feature>
<feature type="region of interest" description="Interaction with substrate tRNA" evidence="1">
    <location>
        <begin position="39"/>
        <end position="42"/>
    </location>
</feature>
<feature type="region of interest" description="Interaction with substrate tRNA" evidence="1">
    <location>
        <begin position="163"/>
        <end position="167"/>
    </location>
</feature>
<feature type="binding site" evidence="1">
    <location>
        <begin position="14"/>
        <end position="21"/>
    </location>
    <ligand>
        <name>ATP</name>
        <dbReference type="ChEBI" id="CHEBI:30616"/>
    </ligand>
</feature>
<feature type="binding site" evidence="1">
    <location>
        <begin position="16"/>
        <end position="21"/>
    </location>
    <ligand>
        <name>substrate</name>
    </ligand>
</feature>
<feature type="site" description="Interaction with substrate tRNA" evidence="1">
    <location>
        <position position="105"/>
    </location>
</feature>
<feature type="site" description="Interaction with substrate tRNA" evidence="1">
    <location>
        <position position="127"/>
    </location>
</feature>
<gene>
    <name evidence="1" type="primary">miaA</name>
    <name type="ordered locus">PXO_00156</name>
</gene>
<name>MIAA_XANOP</name>
<proteinExistence type="inferred from homology"/>